<reference key="1">
    <citation type="journal article" date="1992" name="J. Biol. Chem.">
        <title>Sequence and transcriptional analysis of the Escherichia coli rnt gene encoding RNase T.</title>
        <authorList>
            <person name="Huang S."/>
            <person name="Deutscher M.P."/>
        </authorList>
    </citation>
    <scope>NUCLEOTIDE SEQUENCE [GENOMIC DNA]</scope>
    <scope>CATALYTIC ACTIVITY</scope>
    <source>
        <strain>K12</strain>
    </source>
</reference>
<reference key="2">
    <citation type="journal article" date="1996" name="DNA Res.">
        <title>A 570-kb DNA sequence of the Escherichia coli K-12 genome corresponding to the 28.0-40.1 min region on the linkage map.</title>
        <authorList>
            <person name="Aiba H."/>
            <person name="Baba T."/>
            <person name="Fujita K."/>
            <person name="Hayashi K."/>
            <person name="Inada T."/>
            <person name="Isono K."/>
            <person name="Itoh T."/>
            <person name="Kasai H."/>
            <person name="Kashimoto K."/>
            <person name="Kimura S."/>
            <person name="Kitakawa M."/>
            <person name="Kitagawa M."/>
            <person name="Makino K."/>
            <person name="Miki T."/>
            <person name="Mizobuchi K."/>
            <person name="Mori H."/>
            <person name="Mori T."/>
            <person name="Motomura K."/>
            <person name="Nakade S."/>
            <person name="Nakamura Y."/>
            <person name="Nashimoto H."/>
            <person name="Nishio Y."/>
            <person name="Oshima T."/>
            <person name="Saito N."/>
            <person name="Sampei G."/>
            <person name="Seki Y."/>
            <person name="Sivasundaram S."/>
            <person name="Tagami H."/>
            <person name="Takeda J."/>
            <person name="Takemoto K."/>
            <person name="Takeuchi Y."/>
            <person name="Wada C."/>
            <person name="Yamamoto Y."/>
            <person name="Horiuchi T."/>
        </authorList>
    </citation>
    <scope>NUCLEOTIDE SEQUENCE [LARGE SCALE GENOMIC DNA]</scope>
    <source>
        <strain>K12 / W3110 / ATCC 27325 / DSM 5911</strain>
    </source>
</reference>
<reference key="3">
    <citation type="journal article" date="1997" name="Science">
        <title>The complete genome sequence of Escherichia coli K-12.</title>
        <authorList>
            <person name="Blattner F.R."/>
            <person name="Plunkett G. III"/>
            <person name="Bloch C.A."/>
            <person name="Perna N.T."/>
            <person name="Burland V."/>
            <person name="Riley M."/>
            <person name="Collado-Vides J."/>
            <person name="Glasner J.D."/>
            <person name="Rode C.K."/>
            <person name="Mayhew G.F."/>
            <person name="Gregor J."/>
            <person name="Davis N.W."/>
            <person name="Kirkpatrick H.A."/>
            <person name="Goeden M.A."/>
            <person name="Rose D.J."/>
            <person name="Mau B."/>
            <person name="Shao Y."/>
        </authorList>
    </citation>
    <scope>NUCLEOTIDE SEQUENCE [LARGE SCALE GENOMIC DNA]</scope>
    <source>
        <strain>K12 / MG1655 / ATCC 47076</strain>
    </source>
</reference>
<reference key="4">
    <citation type="journal article" date="2006" name="Mol. Syst. Biol.">
        <title>Highly accurate genome sequences of Escherichia coli K-12 strains MG1655 and W3110.</title>
        <authorList>
            <person name="Hayashi K."/>
            <person name="Morooka N."/>
            <person name="Yamamoto Y."/>
            <person name="Fujita K."/>
            <person name="Isono K."/>
            <person name="Choi S."/>
            <person name="Ohtsubo E."/>
            <person name="Baba T."/>
            <person name="Wanner B.L."/>
            <person name="Mori H."/>
            <person name="Horiuchi T."/>
        </authorList>
    </citation>
    <scope>NUCLEOTIDE SEQUENCE [LARGE SCALE GENOMIC DNA]</scope>
    <source>
        <strain>K12 / W3110 / ATCC 27325 / DSM 5911</strain>
    </source>
</reference>
<reference key="5">
    <citation type="journal article" date="1991" name="J. Bacteriol.">
        <title>RNase T affects Escherichia coli growth and recovery from metabolic stress.</title>
        <authorList>
            <person name="Padmanabha K.P."/>
            <person name="Deutscher M.P."/>
        </authorList>
    </citation>
    <scope>CHARACTERIZATION</scope>
    <source>
        <strain>CA265</strain>
    </source>
</reference>
<reference key="6">
    <citation type="journal article" date="2002" name="J. Biol. Chem.">
        <title>Mechanism of action of RNase T. I. Identification of residues required for catalysis, substrate binding, and dimerization.</title>
        <authorList>
            <person name="Zuo Y."/>
            <person name="Deutscher M.P."/>
        </authorList>
    </citation>
    <scope>FUNCTION</scope>
    <scope>CATALYTIC ACTIVITY</scope>
    <scope>COFACTOR</scope>
    <scope>MUTAGENESIS OF ARG-13; ARG-15; ASP-23; GLU-25; LYS-108; ARG-114; LYS-139; ASP-150; HIS-181 AND ASP-186</scope>
</reference>
<reference key="7">
    <citation type="journal article" date="2007" name="Structure">
        <title>Crystal structure of RNase T, an exoribonuclease involved in tRNA maturation and end turnover.</title>
        <authorList>
            <person name="Zuo Y."/>
            <person name="Zheng H."/>
            <person name="Wang Y."/>
            <person name="Chruszcz M."/>
            <person name="Cymborowski M."/>
            <person name="Skarina T."/>
            <person name="Savchenko A."/>
            <person name="Malhotra A."/>
            <person name="Minor W."/>
        </authorList>
    </citation>
    <scope>X-RAY CRYSTALLOGRAPHY (3.10 ANGSTROMS)</scope>
    <scope>CATALYTIC ACTIVITY</scope>
    <scope>FUNCTION</scope>
    <scope>COFACTOR</scope>
    <scope>SUBUNIT</scope>
</reference>
<reference key="8">
    <citation type="journal article" date="2021" name="Proc. Natl. Acad. Sci. U.S.A.">
        <title>A fluorescence-based genetic screen reveals diverse mechanisms silencing small RNA signaling in E. coli.</title>
        <authorList>
            <person name="Chen J."/>
            <person name="To L."/>
            <person name="de Mets F."/>
            <person name="Luo X."/>
            <person name="Majdalani N."/>
            <person name="Tai C.H."/>
            <person name="Gottesman S."/>
        </authorList>
    </citation>
    <scope>FUNCTION</scope>
    <scope>DISRUPTION PHENOTYPE</scope>
    <source>
        <strain>K12 / MG1655 / ATCC 47076</strain>
    </source>
</reference>
<reference key="9">
    <citation type="journal article" date="2011" name="Nat. Chem. Biol.">
        <title>Structural basis for RNA trimming by RNase T in stable RNA 3'-end maturation.</title>
        <authorList>
            <person name="Hsiao Y.Y."/>
            <person name="Yang C.C."/>
            <person name="Lin C.L."/>
            <person name="Lin J.L."/>
            <person name="Duh Y."/>
            <person name="Yuan H.S."/>
        </authorList>
    </citation>
    <scope>X-RAY CRYSTALLOGRAPHY (2.10 ANGSTROMS) IN COMPLEXES WITH MAGNESIUM AND DNA AS SUBSTRATE ANALOG</scope>
    <scope>FUNCTION</scope>
    <scope>CATALYTIC ACTIVITY</scope>
    <scope>ACTIVE SITE</scope>
    <scope>SITE</scope>
    <scope>COFACTOR</scope>
    <scope>DISRUPTION PHENOTYPE</scope>
    <scope>MUTAGENESIS OF PHE-29; GLU-73; PHE-77; PHE-124 AND PHE-146</scope>
    <scope>SUBUNIT</scope>
</reference>
<reference key="10">
    <citation type="journal article" date="2012" name="Nucleic Acids Res.">
        <title>How an exonuclease decides where to stop in trimming of nucleic acids: crystal structures of RNase T-product complexes.</title>
        <authorList>
            <person name="Hsiao Y.Y."/>
            <person name="Duh Y."/>
            <person name="Chen Y.P."/>
            <person name="Wang Y.T."/>
            <person name="Yuan H.S."/>
        </authorList>
    </citation>
    <scope>X-RAY CRYSTALLOGRAPHY (1.70 ANGSTROMS) IN COMPLEXES WITH MAGNESIUM AND DNA AS SUBSTRATE ANALOG</scope>
    <scope>COFACTOR</scope>
    <scope>ACTIVE SITE</scope>
    <scope>CATALYTIC ACTIVITY</scope>
</reference>
<keyword id="KW-0002">3D-structure</keyword>
<keyword id="KW-0269">Exonuclease</keyword>
<keyword id="KW-0378">Hydrolase</keyword>
<keyword id="KW-0460">Magnesium</keyword>
<keyword id="KW-0479">Metal-binding</keyword>
<keyword id="KW-0540">Nuclease</keyword>
<keyword id="KW-1185">Reference proteome</keyword>
<keyword id="KW-0819">tRNA processing</keyword>
<proteinExistence type="evidence at protein level"/>
<gene>
    <name evidence="1" type="primary">rnt</name>
    <name type="ordered locus">b1652</name>
    <name type="ordered locus">JW1644</name>
</gene>
<name>RNT_ECOLI</name>
<dbReference type="EC" id="3.1.13.-" evidence="1"/>
<dbReference type="EMBL" id="L01622">
    <property type="protein sequence ID" value="AAC37008.1"/>
    <property type="molecule type" value="Genomic_DNA"/>
</dbReference>
<dbReference type="EMBL" id="U00096">
    <property type="protein sequence ID" value="AAC74724.1"/>
    <property type="molecule type" value="Genomic_DNA"/>
</dbReference>
<dbReference type="EMBL" id="AP009048">
    <property type="protein sequence ID" value="BAA15418.2"/>
    <property type="molecule type" value="Genomic_DNA"/>
</dbReference>
<dbReference type="PIR" id="A45065">
    <property type="entry name" value="A45065"/>
</dbReference>
<dbReference type="RefSeq" id="NP_416169.1">
    <property type="nucleotide sequence ID" value="NC_000913.3"/>
</dbReference>
<dbReference type="RefSeq" id="WP_001282283.1">
    <property type="nucleotide sequence ID" value="NZ_SSZK01000001.1"/>
</dbReference>
<dbReference type="PDB" id="2IS3">
    <property type="method" value="X-ray"/>
    <property type="resolution" value="3.10 A"/>
    <property type="chains" value="A/B/C/D=1-215"/>
</dbReference>
<dbReference type="PDB" id="3NGY">
    <property type="method" value="X-ray"/>
    <property type="resolution" value="2.20 A"/>
    <property type="chains" value="A/B/C/D=1-215"/>
</dbReference>
<dbReference type="PDB" id="3NGZ">
    <property type="method" value="X-ray"/>
    <property type="resolution" value="2.10 A"/>
    <property type="chains" value="A/B=1-215"/>
</dbReference>
<dbReference type="PDB" id="3NH0">
    <property type="method" value="X-ray"/>
    <property type="resolution" value="2.30 A"/>
    <property type="chains" value="A/B=1-215"/>
</dbReference>
<dbReference type="PDB" id="3NH1">
    <property type="method" value="X-ray"/>
    <property type="resolution" value="2.11 A"/>
    <property type="chains" value="A/B/C/D=1-215"/>
</dbReference>
<dbReference type="PDB" id="3NH2">
    <property type="method" value="X-ray"/>
    <property type="resolution" value="2.30 A"/>
    <property type="chains" value="A/B/E/F=1-215"/>
</dbReference>
<dbReference type="PDB" id="3V9S">
    <property type="method" value="X-ray"/>
    <property type="resolution" value="2.10 A"/>
    <property type="chains" value="A/B=1-215"/>
</dbReference>
<dbReference type="PDB" id="3V9U">
    <property type="method" value="X-ray"/>
    <property type="resolution" value="2.30 A"/>
    <property type="chains" value="A/B/C/D=1-215"/>
</dbReference>
<dbReference type="PDB" id="3V9W">
    <property type="method" value="X-ray"/>
    <property type="resolution" value="1.70 A"/>
    <property type="chains" value="A/B/C/D=1-215"/>
</dbReference>
<dbReference type="PDB" id="3V9X">
    <property type="method" value="X-ray"/>
    <property type="resolution" value="1.90 A"/>
    <property type="chains" value="A/B/C/D=1-215"/>
</dbReference>
<dbReference type="PDB" id="3V9Z">
    <property type="method" value="X-ray"/>
    <property type="resolution" value="1.80 A"/>
    <property type="chains" value="A/B=1-215"/>
</dbReference>
<dbReference type="PDB" id="3VA0">
    <property type="method" value="X-ray"/>
    <property type="resolution" value="2.20 A"/>
    <property type="chains" value="A/B=1-215"/>
</dbReference>
<dbReference type="PDB" id="3VA3">
    <property type="method" value="X-ray"/>
    <property type="resolution" value="2.71 A"/>
    <property type="chains" value="A/B=1-215"/>
</dbReference>
<dbReference type="PDB" id="4KAZ">
    <property type="method" value="X-ray"/>
    <property type="resolution" value="1.90 A"/>
    <property type="chains" value="A=1-215"/>
</dbReference>
<dbReference type="PDB" id="4KB0">
    <property type="method" value="X-ray"/>
    <property type="resolution" value="2.00 A"/>
    <property type="chains" value="A/B=1-215"/>
</dbReference>
<dbReference type="PDB" id="4KB1">
    <property type="method" value="X-ray"/>
    <property type="resolution" value="1.80 A"/>
    <property type="chains" value="A/B=1-215"/>
</dbReference>
<dbReference type="PDBsum" id="2IS3"/>
<dbReference type="PDBsum" id="3NGY"/>
<dbReference type="PDBsum" id="3NGZ"/>
<dbReference type="PDBsum" id="3NH0"/>
<dbReference type="PDBsum" id="3NH1"/>
<dbReference type="PDBsum" id="3NH2"/>
<dbReference type="PDBsum" id="3V9S"/>
<dbReference type="PDBsum" id="3V9U"/>
<dbReference type="PDBsum" id="3V9W"/>
<dbReference type="PDBsum" id="3V9X"/>
<dbReference type="PDBsum" id="3V9Z"/>
<dbReference type="PDBsum" id="3VA0"/>
<dbReference type="PDBsum" id="3VA3"/>
<dbReference type="PDBsum" id="4KAZ"/>
<dbReference type="PDBsum" id="4KB0"/>
<dbReference type="PDBsum" id="4KB1"/>
<dbReference type="SMR" id="P30014"/>
<dbReference type="BioGRID" id="4260267">
    <property type="interactions" value="149"/>
</dbReference>
<dbReference type="BioGRID" id="850519">
    <property type="interactions" value="1"/>
</dbReference>
<dbReference type="DIP" id="DIP-10734N"/>
<dbReference type="FunCoup" id="P30014">
    <property type="interactions" value="48"/>
</dbReference>
<dbReference type="IntAct" id="P30014">
    <property type="interactions" value="2"/>
</dbReference>
<dbReference type="STRING" id="511145.b1652"/>
<dbReference type="ChEMBL" id="CHEMBL3879866"/>
<dbReference type="jPOST" id="P30014"/>
<dbReference type="PaxDb" id="511145-b1652"/>
<dbReference type="EnsemblBacteria" id="AAC74724">
    <property type="protein sequence ID" value="AAC74724"/>
    <property type="gene ID" value="b1652"/>
</dbReference>
<dbReference type="GeneID" id="946159"/>
<dbReference type="KEGG" id="ecj:JW1644"/>
<dbReference type="KEGG" id="eco:b1652"/>
<dbReference type="KEGG" id="ecoc:C3026_09480"/>
<dbReference type="PATRIC" id="fig|1411691.4.peg.607"/>
<dbReference type="EchoBASE" id="EB1509"/>
<dbReference type="eggNOG" id="COG0847">
    <property type="taxonomic scope" value="Bacteria"/>
</dbReference>
<dbReference type="HOGENOM" id="CLU_082724_0_0_6"/>
<dbReference type="InParanoid" id="P30014"/>
<dbReference type="OMA" id="CYMVNHL"/>
<dbReference type="OrthoDB" id="9778264at2"/>
<dbReference type="PhylomeDB" id="P30014"/>
<dbReference type="BioCyc" id="EcoCyc:EG11547-MONOMER"/>
<dbReference type="BioCyc" id="MetaCyc:EG11547-MONOMER"/>
<dbReference type="BRENDA" id="3.1.13.3">
    <property type="organism ID" value="2026"/>
</dbReference>
<dbReference type="EvolutionaryTrace" id="P30014"/>
<dbReference type="PRO" id="PR:P30014"/>
<dbReference type="Proteomes" id="UP000000625">
    <property type="component" value="Chromosome"/>
</dbReference>
<dbReference type="GO" id="GO:0005829">
    <property type="term" value="C:cytosol"/>
    <property type="evidence" value="ECO:0000314"/>
    <property type="project" value="EcoCyc"/>
</dbReference>
<dbReference type="GO" id="GO:0008408">
    <property type="term" value="F:3'-5' exonuclease activity"/>
    <property type="evidence" value="ECO:0000314"/>
    <property type="project" value="EcoCyc"/>
</dbReference>
<dbReference type="GO" id="GO:0000175">
    <property type="term" value="F:3'-5'-RNA exonuclease activity"/>
    <property type="evidence" value="ECO:0000314"/>
    <property type="project" value="EcoCyc"/>
</dbReference>
<dbReference type="GO" id="GO:0042802">
    <property type="term" value="F:identical protein binding"/>
    <property type="evidence" value="ECO:0000353"/>
    <property type="project" value="IntAct"/>
</dbReference>
<dbReference type="GO" id="GO:0000287">
    <property type="term" value="F:magnesium ion binding"/>
    <property type="evidence" value="ECO:0000314"/>
    <property type="project" value="EcoCyc"/>
</dbReference>
<dbReference type="GO" id="GO:0003676">
    <property type="term" value="F:nucleic acid binding"/>
    <property type="evidence" value="ECO:0007669"/>
    <property type="project" value="InterPro"/>
</dbReference>
<dbReference type="GO" id="GO:0042803">
    <property type="term" value="F:protein homodimerization activity"/>
    <property type="evidence" value="ECO:0000353"/>
    <property type="project" value="EcoCyc"/>
</dbReference>
<dbReference type="GO" id="GO:0008310">
    <property type="term" value="F:single-stranded DNA 3'-5' DNA exonuclease activity"/>
    <property type="evidence" value="ECO:0000314"/>
    <property type="project" value="EcoCyc"/>
</dbReference>
<dbReference type="GO" id="GO:0034644">
    <property type="term" value="P:cellular response to UV"/>
    <property type="evidence" value="ECO:0000269"/>
    <property type="project" value="EcoCyc"/>
</dbReference>
<dbReference type="GO" id="GO:0006974">
    <property type="term" value="P:DNA damage response"/>
    <property type="evidence" value="ECO:0000315"/>
    <property type="project" value="EcoCyc"/>
</dbReference>
<dbReference type="GO" id="GO:0045004">
    <property type="term" value="P:DNA replication proofreading"/>
    <property type="evidence" value="ECO:0000318"/>
    <property type="project" value="GO_Central"/>
</dbReference>
<dbReference type="GO" id="GO:0043628">
    <property type="term" value="P:regulatory ncRNA 3'-end processing"/>
    <property type="evidence" value="ECO:0000315"/>
    <property type="project" value="EcoCyc"/>
</dbReference>
<dbReference type="GO" id="GO:0031125">
    <property type="term" value="P:rRNA 3'-end processing"/>
    <property type="evidence" value="ECO:0000315"/>
    <property type="project" value="EcoCyc"/>
</dbReference>
<dbReference type="GO" id="GO:0042780">
    <property type="term" value="P:tRNA 3'-end processing"/>
    <property type="evidence" value="ECO:0000315"/>
    <property type="project" value="EcoCyc"/>
</dbReference>
<dbReference type="CDD" id="cd06134">
    <property type="entry name" value="RNaseT"/>
    <property type="match status" value="1"/>
</dbReference>
<dbReference type="FunFam" id="3.30.420.10:FF:000009">
    <property type="entry name" value="Ribonuclease T"/>
    <property type="match status" value="1"/>
</dbReference>
<dbReference type="Gene3D" id="3.30.420.10">
    <property type="entry name" value="Ribonuclease H-like superfamily/Ribonuclease H"/>
    <property type="match status" value="1"/>
</dbReference>
<dbReference type="HAMAP" id="MF_00157">
    <property type="entry name" value="RNase_T"/>
    <property type="match status" value="1"/>
</dbReference>
<dbReference type="InterPro" id="IPR013520">
    <property type="entry name" value="Exonuclease_RNaseT/DNA_pol3"/>
</dbReference>
<dbReference type="InterPro" id="IPR005987">
    <property type="entry name" value="RNase_T"/>
</dbReference>
<dbReference type="InterPro" id="IPR012337">
    <property type="entry name" value="RNaseH-like_sf"/>
</dbReference>
<dbReference type="InterPro" id="IPR036397">
    <property type="entry name" value="RNaseH_sf"/>
</dbReference>
<dbReference type="NCBIfam" id="TIGR01298">
    <property type="entry name" value="RNaseT"/>
    <property type="match status" value="1"/>
</dbReference>
<dbReference type="PANTHER" id="PTHR30231">
    <property type="entry name" value="DNA POLYMERASE III SUBUNIT EPSILON"/>
    <property type="match status" value="1"/>
</dbReference>
<dbReference type="PANTHER" id="PTHR30231:SF2">
    <property type="entry name" value="RIBONUCLEASE T"/>
    <property type="match status" value="1"/>
</dbReference>
<dbReference type="Pfam" id="PF00929">
    <property type="entry name" value="RNase_T"/>
    <property type="match status" value="1"/>
</dbReference>
<dbReference type="SMART" id="SM00479">
    <property type="entry name" value="EXOIII"/>
    <property type="match status" value="1"/>
</dbReference>
<dbReference type="SUPFAM" id="SSF53098">
    <property type="entry name" value="Ribonuclease H-like"/>
    <property type="match status" value="1"/>
</dbReference>
<sequence length="215" mass="23523">MSDNAQLTGLCDRFRGFYPVVIDVETAGFNAKTDALLEIAAITLKMDEQGWLMPDTTLHFHVEPFVGANLQPEALAFNGIDPNDPDRGAVSEYEALHEIFKVVRKGIKASGCNRAIMVAHNANFDHSFMMAAAERASLKRNPFHPFATFDTAALAGLALGQTVLSKACQTAGMDFDSTQAHSALYDTERTAVLFCEIVNRWKRLGGWPLSAAEEV</sequence>
<protein>
    <recommendedName>
        <fullName evidence="1">Ribonuclease T</fullName>
        <ecNumber evidence="1">3.1.13.-</ecNumber>
    </recommendedName>
    <alternativeName>
        <fullName evidence="1">Exoribonuclease T</fullName>
        <shortName evidence="1">RNase T</shortName>
    </alternativeName>
</protein>
<evidence type="ECO:0000255" key="1">
    <source>
        <dbReference type="HAMAP-Rule" id="MF_00157"/>
    </source>
</evidence>
<evidence type="ECO:0000269" key="2">
    <source>
    </source>
</evidence>
<evidence type="ECO:0000269" key="3">
    <source>
    </source>
</evidence>
<evidence type="ECO:0000269" key="4">
    <source>
    </source>
</evidence>
<evidence type="ECO:0000269" key="5">
    <source>
    </source>
</evidence>
<evidence type="ECO:0000269" key="6">
    <source>
    </source>
</evidence>
<evidence type="ECO:0007829" key="7">
    <source>
        <dbReference type="PDB" id="3NGY"/>
    </source>
</evidence>
<evidence type="ECO:0007829" key="8">
    <source>
        <dbReference type="PDB" id="3NH1"/>
    </source>
</evidence>
<evidence type="ECO:0007829" key="9">
    <source>
        <dbReference type="PDB" id="3V9W"/>
    </source>
</evidence>
<evidence type="ECO:0007829" key="10">
    <source>
        <dbReference type="PDB" id="3V9Z"/>
    </source>
</evidence>
<accession>P30014</accession>
<accession>P76896</accession>
<organism>
    <name type="scientific">Escherichia coli (strain K12)</name>
    <dbReference type="NCBI Taxonomy" id="83333"/>
    <lineage>
        <taxon>Bacteria</taxon>
        <taxon>Pseudomonadati</taxon>
        <taxon>Pseudomonadota</taxon>
        <taxon>Gammaproteobacteria</taxon>
        <taxon>Enterobacterales</taxon>
        <taxon>Enterobacteriaceae</taxon>
        <taxon>Escherichia</taxon>
    </lineage>
</organism>
<feature type="chain" id="PRO_0000208960" description="Ribonuclease T">
    <location>
        <begin position="1"/>
        <end position="215"/>
    </location>
</feature>
<feature type="domain" description="Exonuclease" evidence="1">
    <location>
        <begin position="20"/>
        <end position="194"/>
    </location>
</feature>
<feature type="active site" description="Proton donor/acceptor" evidence="1 4 5">
    <location>
        <position position="181"/>
    </location>
</feature>
<feature type="binding site">
    <location>
        <position position="23"/>
    </location>
    <ligand>
        <name>Mg(2+)</name>
        <dbReference type="ChEBI" id="CHEBI:18420"/>
        <label>1</label>
        <note>catalytic</note>
    </ligand>
</feature>
<feature type="binding site">
    <location>
        <position position="23"/>
    </location>
    <ligand>
        <name>Mg(2+)</name>
        <dbReference type="ChEBI" id="CHEBI:18420"/>
        <label>2</label>
        <note>catalytic</note>
    </ligand>
</feature>
<feature type="binding site">
    <location>
        <position position="25"/>
    </location>
    <ligand>
        <name>Mg(2+)</name>
        <dbReference type="ChEBI" id="CHEBI:18420"/>
        <label>2</label>
        <note>catalytic</note>
    </ligand>
</feature>
<feature type="binding site">
    <location>
        <position position="181"/>
    </location>
    <ligand>
        <name>Mg(2+)</name>
        <dbReference type="ChEBI" id="CHEBI:18420"/>
        <label>2</label>
        <note>catalytic</note>
    </ligand>
</feature>
<feature type="binding site">
    <location>
        <position position="186"/>
    </location>
    <ligand>
        <name>Mg(2+)</name>
        <dbReference type="ChEBI" id="CHEBI:18420"/>
        <label>2</label>
        <note>catalytic</note>
    </ligand>
</feature>
<feature type="site" description="Important for substrate binding and specificity">
    <location>
        <position position="29"/>
    </location>
</feature>
<feature type="site" description="Important for substrate binding and specificity">
    <location>
        <position position="73"/>
    </location>
</feature>
<feature type="site" description="Important for substrate binding and specificity">
    <location>
        <position position="77"/>
    </location>
</feature>
<feature type="site" description="Important for substrate binding and specificity">
    <location>
        <position position="124"/>
    </location>
</feature>
<feature type="site" description="Important for substrate binding and specificity">
    <location>
        <position position="146"/>
    </location>
</feature>
<feature type="mutagenesis site" description="Strongly reduces affinity for RNA. Nearly abolishes enzyme activity." evidence="2">
    <original>R</original>
    <variation>A</variation>
    <location>
        <position position="13"/>
    </location>
</feature>
<feature type="mutagenesis site" description="Strongly reduces affinity for RNA." evidence="2">
    <original>R</original>
    <variation>A</variation>
    <location>
        <position position="15"/>
    </location>
</feature>
<feature type="mutagenesis site" description="Nearly abolishes enzyme activity." evidence="2">
    <original>D</original>
    <variation>A</variation>
    <location>
        <position position="23"/>
    </location>
</feature>
<feature type="mutagenesis site" description="Nearly abolishes enzyme activity." evidence="2">
    <original>E</original>
    <variation>A</variation>
    <location>
        <position position="25"/>
    </location>
</feature>
<feature type="mutagenesis site" description="Abolishes enzyme activity; when associated with A-73 and A-77." evidence="4">
    <original>F</original>
    <variation>A</variation>
    <location>
        <position position="29"/>
    </location>
</feature>
<feature type="mutagenesis site" description="Reduces enzyme activity. Abolishes enzyme activity; when associated with A-29 and A-77." evidence="4">
    <original>E</original>
    <variation>A</variation>
    <location>
        <position position="73"/>
    </location>
</feature>
<feature type="mutagenesis site" description="Abolishes enzyme activity; when associated with A-29 and A-73." evidence="4">
    <original>F</original>
    <variation>A</variation>
    <location>
        <position position="77"/>
    </location>
</feature>
<feature type="mutagenesis site" description="Strongly reduces affinity for RNA." evidence="2">
    <original>K</original>
    <variation>A</variation>
    <location>
        <position position="108"/>
    </location>
</feature>
<feature type="mutagenesis site" description="Strongly reduces affinity for RNA." evidence="2">
    <original>R</original>
    <variation>A</variation>
    <location>
        <position position="114"/>
    </location>
</feature>
<feature type="mutagenesis site" description="Abolishes enzyme activity; when associated with A-146." evidence="4">
    <original>F</original>
    <variation>A</variation>
    <location>
        <position position="124"/>
    </location>
</feature>
<feature type="mutagenesis site" description="Reduces affinity for RNA." evidence="2">
    <original>K</original>
    <variation>A</variation>
    <location>
        <position position="139"/>
    </location>
</feature>
<feature type="mutagenesis site" description="Abolishes enzyme activity; when associated with A-124." evidence="4">
    <original>F</original>
    <variation>A</variation>
    <location>
        <position position="146"/>
    </location>
</feature>
<feature type="mutagenesis site" description="Nearly abolishes enzyme activity." evidence="2">
    <original>D</original>
    <variation>A</variation>
    <location>
        <position position="150"/>
    </location>
</feature>
<feature type="mutagenesis site" description="Nearly abolishes enzyme activity." evidence="2">
    <original>H</original>
    <variation>A</variation>
    <location>
        <position position="181"/>
    </location>
</feature>
<feature type="mutagenesis site" description="Nearly abolishes enzyme activity." evidence="2">
    <original>D</original>
    <variation>A</variation>
    <location>
        <position position="186"/>
    </location>
</feature>
<feature type="helix" evidence="8">
    <location>
        <begin position="5"/>
        <end position="7"/>
    </location>
</feature>
<feature type="helix" evidence="9">
    <location>
        <begin position="10"/>
        <end position="13"/>
    </location>
</feature>
<feature type="turn" evidence="9">
    <location>
        <begin position="14"/>
        <end position="16"/>
    </location>
</feature>
<feature type="strand" evidence="9">
    <location>
        <begin position="17"/>
        <end position="29"/>
    </location>
</feature>
<feature type="turn" evidence="9">
    <location>
        <begin position="31"/>
        <end position="33"/>
    </location>
</feature>
<feature type="strand" evidence="9">
    <location>
        <begin position="36"/>
        <end position="46"/>
    </location>
</feature>
<feature type="strand" evidence="7">
    <location>
        <begin position="48"/>
        <end position="50"/>
    </location>
</feature>
<feature type="strand" evidence="9">
    <location>
        <begin position="52"/>
        <end position="62"/>
    </location>
</feature>
<feature type="helix" evidence="9">
    <location>
        <begin position="72"/>
        <end position="78"/>
    </location>
</feature>
<feature type="helix" evidence="9">
    <location>
        <begin position="85"/>
        <end position="87"/>
    </location>
</feature>
<feature type="helix" evidence="9">
    <location>
        <begin position="92"/>
        <end position="107"/>
    </location>
</feature>
<feature type="turn" evidence="9">
    <location>
        <begin position="108"/>
        <end position="111"/>
    </location>
</feature>
<feature type="strand" evidence="9">
    <location>
        <begin position="114"/>
        <end position="119"/>
    </location>
</feature>
<feature type="turn" evidence="9">
    <location>
        <begin position="120"/>
        <end position="122"/>
    </location>
</feature>
<feature type="helix" evidence="9">
    <location>
        <begin position="123"/>
        <end position="135"/>
    </location>
</feature>
<feature type="strand" evidence="9">
    <location>
        <begin position="143"/>
        <end position="150"/>
    </location>
</feature>
<feature type="helix" evidence="9">
    <location>
        <begin position="151"/>
        <end position="159"/>
    </location>
</feature>
<feature type="helix" evidence="9">
    <location>
        <begin position="164"/>
        <end position="171"/>
    </location>
</feature>
<feature type="turn" evidence="9">
    <location>
        <begin position="177"/>
        <end position="181"/>
    </location>
</feature>
<feature type="helix" evidence="9">
    <location>
        <begin position="183"/>
        <end position="203"/>
    </location>
</feature>
<feature type="helix" evidence="10">
    <location>
        <begin position="211"/>
        <end position="213"/>
    </location>
</feature>
<comment type="function">
    <text evidence="1 2 3 4">Trims short 3' overhangs of a variety of RNA species, leaving a one or two nucleotide 3' overhang. Responsible for the end-turnover of tRNA: specifically removes the terminal AMP residue from uncharged tRNA (tRNA-C-C-A). Also appears to be involved in tRNA biosynthesis, especially in strains lacking other exoribonucleases.</text>
</comment>
<comment type="function">
    <text evidence="6">A general regulator of small RNAs (sRNA), contributes to their degradation. Upon overexpression suppresses sRNA-mediated RhyB-silencing of multiple RNA targets; overexpression leads to nearly complete loss of RhyB sRNA.</text>
</comment>
<comment type="cofactor">
    <cofactor evidence="1 2 3 4 5">
        <name>Mg(2+)</name>
        <dbReference type="ChEBI" id="CHEBI:18420"/>
    </cofactor>
    <text evidence="1 2 3 4 5">Binds two Mg(2+) per subunit. The active form of the enzyme binds two Mg(2+) ions in its active site. The first Mg(2+) forms only one salt bridge with the protein.</text>
</comment>
<comment type="subunit">
    <text evidence="1 3 4">Homodimer.</text>
</comment>
<comment type="interaction">
    <interactant intactId="EBI-557418">
        <id>P30014</id>
    </interactant>
    <interactant intactId="EBI-542707">
        <id>P06959</id>
        <label>aceF</label>
    </interactant>
    <organismsDiffer>false</organismsDiffer>
    <experiments>2</experiments>
</comment>
<comment type="interaction">
    <interactant intactId="EBI-557418">
        <id>P30014</id>
    </interactant>
    <interactant intactId="EBI-557418">
        <id>P30014</id>
        <label>rnt</label>
    </interactant>
    <organismsDiffer>false</organismsDiffer>
    <experiments>3</experiments>
</comment>
<comment type="disruption phenotype">
    <text evidence="4 6">Required for optimal growth (PubMed:21317904). Significantly slowed cell growth, increased expression of sodB reporter construct (PubMed:34210798).</text>
</comment>
<comment type="miscellaneous">
    <text>Member of the DEDD group of RNAses that are characterized by the presence of four acidic residues in the active site. These residues are conserved even when the proteins have highly divergent sequences.</text>
</comment>
<comment type="similarity">
    <text evidence="1">Belongs to the RNase T family.</text>
</comment>